<name>RN2A_LITST</name>
<comment type="function">
    <text evidence="1">Antibacterial activity against Gram-positive bacterium S.aureus. Shows no detectable hemolytic activity towards human erythrocytes.</text>
</comment>
<comment type="subcellular location">
    <subcellularLocation>
        <location evidence="2">Secreted</location>
    </subcellularLocation>
</comment>
<comment type="tissue specificity">
    <text evidence="5">Expressed by the skin glands.</text>
</comment>
<comment type="developmental stage">
    <text evidence="5">Is equally expressed in juvenile and adult (male and female) frogs.</text>
</comment>
<comment type="mass spectrometry" mass="3689.0" method="MALDI" evidence="2"/>
<comment type="similarity">
    <text evidence="4">Belongs to the frog skin active peptide (FSAP) family. Ranatuerin subfamily.</text>
</comment>
<comment type="online information" name="The antimicrobial peptide database">
    <link uri="https://wangapd3.com/database/query_output.php?ID=01442"/>
</comment>
<dbReference type="SMR" id="P0DQK3"/>
<dbReference type="GO" id="GO:0005576">
    <property type="term" value="C:extracellular region"/>
    <property type="evidence" value="ECO:0007669"/>
    <property type="project" value="UniProtKB-SubCell"/>
</dbReference>
<dbReference type="GO" id="GO:0050832">
    <property type="term" value="P:defense response to fungus"/>
    <property type="evidence" value="ECO:0007669"/>
    <property type="project" value="UniProtKB-KW"/>
</dbReference>
<dbReference type="GO" id="GO:0050829">
    <property type="term" value="P:defense response to Gram-negative bacterium"/>
    <property type="evidence" value="ECO:0007669"/>
    <property type="project" value="UniProtKB-ARBA"/>
</dbReference>
<dbReference type="GO" id="GO:0031640">
    <property type="term" value="P:killing of cells of another organism"/>
    <property type="evidence" value="ECO:0007669"/>
    <property type="project" value="UniProtKB-KW"/>
</dbReference>
<dbReference type="InterPro" id="IPR012521">
    <property type="entry name" value="Antimicrobial_frog_2"/>
</dbReference>
<dbReference type="Pfam" id="PF08023">
    <property type="entry name" value="Antimicrobial_2"/>
    <property type="match status" value="1"/>
</dbReference>
<evidence type="ECO:0000250" key="1">
    <source>
        <dbReference type="UniProtKB" id="P82742"/>
    </source>
</evidence>
<evidence type="ECO:0000269" key="2">
    <source>
    </source>
</evidence>
<evidence type="ECO:0000303" key="3">
    <source>
    </source>
</evidence>
<evidence type="ECO:0000305" key="4"/>
<evidence type="ECO:0000305" key="5">
    <source>
    </source>
</evidence>
<reference key="1">
    <citation type="journal article" date="2004" name="Comp. Biochem. Physiol.">
        <title>Purification and characterization of antimicrobial peptides from the skin secretions of the mink frog (Rana septentrionalis).</title>
        <authorList>
            <person name="Bevier C.R."/>
            <person name="Sonnevend A."/>
            <person name="Kolodziejek J."/>
            <person name="Nowotny N."/>
            <person name="Nielsen P.F."/>
            <person name="Conlon J.M."/>
        </authorList>
    </citation>
    <scope>PROTEIN SEQUENCE</scope>
    <scope>SUBCELLULAR LOCATION</scope>
    <scope>MASS SPECTROMETRY</scope>
    <scope>DEVELOPMENTAL STAGE</scope>
    <scope>DISULFIDE BOND</scope>
    <source>
        <tissue>Skin secretion</tissue>
    </source>
</reference>
<sequence length="35" mass="3693">GLFLNTVKDVAKDVAKDVAGKLLESLKCKITGCKS</sequence>
<feature type="peptide" id="PRO_0000449480" description="Ranatuerin-2SPa" evidence="2">
    <location>
        <begin position="1"/>
        <end position="35"/>
    </location>
</feature>
<feature type="disulfide bond" evidence="2">
    <location>
        <begin position="28"/>
        <end position="33"/>
    </location>
</feature>
<organism>
    <name type="scientific">Lithobates septentrionalis</name>
    <name type="common">Mink frog</name>
    <name type="synonym">Rana septentrionalis</name>
    <dbReference type="NCBI Taxonomy" id="190274"/>
    <lineage>
        <taxon>Eukaryota</taxon>
        <taxon>Metazoa</taxon>
        <taxon>Chordata</taxon>
        <taxon>Craniata</taxon>
        <taxon>Vertebrata</taxon>
        <taxon>Euteleostomi</taxon>
        <taxon>Amphibia</taxon>
        <taxon>Batrachia</taxon>
        <taxon>Anura</taxon>
        <taxon>Neobatrachia</taxon>
        <taxon>Ranoidea</taxon>
        <taxon>Ranidae</taxon>
        <taxon>Lithobates</taxon>
    </lineage>
</organism>
<protein>
    <recommendedName>
        <fullName evidence="3">Ranatuerin-2SPa</fullName>
    </recommendedName>
</protein>
<proteinExistence type="evidence at protein level"/>
<keyword id="KW-0878">Amphibian defense peptide</keyword>
<keyword id="KW-0044">Antibiotic</keyword>
<keyword id="KW-0929">Antimicrobial</keyword>
<keyword id="KW-0903">Direct protein sequencing</keyword>
<keyword id="KW-1015">Disulfide bond</keyword>
<keyword id="KW-0295">Fungicide</keyword>
<keyword id="KW-0964">Secreted</keyword>
<accession>P0DQK3</accession>